<feature type="chain" id="PRO_0000241380" description="Large ribosomal subunit protein uL3">
    <location>
        <begin position="1"/>
        <end position="235"/>
    </location>
</feature>
<feature type="region of interest" description="Disordered" evidence="2">
    <location>
        <begin position="150"/>
        <end position="189"/>
    </location>
</feature>
<gene>
    <name evidence="1" type="primary">rplC</name>
    <name type="ordered locus">pc0412</name>
</gene>
<proteinExistence type="inferred from homology"/>
<name>RL3_PARUW</name>
<sequence>MLNSGSLIWLRIDYMALTMMGKKRGMIQLFDEKGNAIVCTVIQAEPNVITQIKTKETDGYTALQLGFEKVTGKTQHTIEARTGKPRLGHFKKAGVESRRFLVESRLDSTEEYTLGQEISVDTFNGIEFVDATAISKGKGYQGVMKRHNFAGGPASHGSGHHRHAGSTGMRSTPGRGLPGGKKAGQMGNERVTVQNLRIVKVDSENHVIVVKGQVPGPRNGLVYITQAKKLAKKKS</sequence>
<organism>
    <name type="scientific">Protochlamydia amoebophila (strain UWE25)</name>
    <dbReference type="NCBI Taxonomy" id="264201"/>
    <lineage>
        <taxon>Bacteria</taxon>
        <taxon>Pseudomonadati</taxon>
        <taxon>Chlamydiota</taxon>
        <taxon>Chlamydiia</taxon>
        <taxon>Parachlamydiales</taxon>
        <taxon>Parachlamydiaceae</taxon>
        <taxon>Candidatus Protochlamydia</taxon>
    </lineage>
</organism>
<protein>
    <recommendedName>
        <fullName evidence="1">Large ribosomal subunit protein uL3</fullName>
    </recommendedName>
    <alternativeName>
        <fullName evidence="3">50S ribosomal protein L3</fullName>
    </alternativeName>
</protein>
<accession>Q6ME63</accession>
<comment type="function">
    <text evidence="1">One of the primary rRNA binding proteins, it binds directly near the 3'-end of the 23S rRNA, where it nucleates assembly of the 50S subunit.</text>
</comment>
<comment type="subunit">
    <text evidence="1">Part of the 50S ribosomal subunit. Forms a cluster with proteins L14 and L19.</text>
</comment>
<comment type="similarity">
    <text evidence="1">Belongs to the universal ribosomal protein uL3 family.</text>
</comment>
<keyword id="KW-1185">Reference proteome</keyword>
<keyword id="KW-0687">Ribonucleoprotein</keyword>
<keyword id="KW-0689">Ribosomal protein</keyword>
<keyword id="KW-0694">RNA-binding</keyword>
<keyword id="KW-0699">rRNA-binding</keyword>
<dbReference type="EMBL" id="BX908798">
    <property type="protein sequence ID" value="CAF23136.1"/>
    <property type="molecule type" value="Genomic_DNA"/>
</dbReference>
<dbReference type="SMR" id="Q6ME63"/>
<dbReference type="STRING" id="264201.pc0412"/>
<dbReference type="eggNOG" id="COG0087">
    <property type="taxonomic scope" value="Bacteria"/>
</dbReference>
<dbReference type="HOGENOM" id="CLU_044142_4_1_0"/>
<dbReference type="Proteomes" id="UP000000529">
    <property type="component" value="Chromosome"/>
</dbReference>
<dbReference type="GO" id="GO:0022625">
    <property type="term" value="C:cytosolic large ribosomal subunit"/>
    <property type="evidence" value="ECO:0007669"/>
    <property type="project" value="TreeGrafter"/>
</dbReference>
<dbReference type="GO" id="GO:0019843">
    <property type="term" value="F:rRNA binding"/>
    <property type="evidence" value="ECO:0007669"/>
    <property type="project" value="UniProtKB-UniRule"/>
</dbReference>
<dbReference type="GO" id="GO:0003735">
    <property type="term" value="F:structural constituent of ribosome"/>
    <property type="evidence" value="ECO:0007669"/>
    <property type="project" value="InterPro"/>
</dbReference>
<dbReference type="GO" id="GO:0006412">
    <property type="term" value="P:translation"/>
    <property type="evidence" value="ECO:0007669"/>
    <property type="project" value="UniProtKB-UniRule"/>
</dbReference>
<dbReference type="FunFam" id="2.40.30.10:FF:000004">
    <property type="entry name" value="50S ribosomal protein L3"/>
    <property type="match status" value="1"/>
</dbReference>
<dbReference type="FunFam" id="3.30.160.810:FF:000001">
    <property type="entry name" value="50S ribosomal protein L3"/>
    <property type="match status" value="1"/>
</dbReference>
<dbReference type="Gene3D" id="3.30.160.810">
    <property type="match status" value="1"/>
</dbReference>
<dbReference type="Gene3D" id="2.40.30.10">
    <property type="entry name" value="Translation factors"/>
    <property type="match status" value="1"/>
</dbReference>
<dbReference type="HAMAP" id="MF_01325_B">
    <property type="entry name" value="Ribosomal_uL3_B"/>
    <property type="match status" value="1"/>
</dbReference>
<dbReference type="InterPro" id="IPR000597">
    <property type="entry name" value="Ribosomal_uL3"/>
</dbReference>
<dbReference type="InterPro" id="IPR019927">
    <property type="entry name" value="Ribosomal_uL3_bac/org-type"/>
</dbReference>
<dbReference type="InterPro" id="IPR019926">
    <property type="entry name" value="Ribosomal_uL3_CS"/>
</dbReference>
<dbReference type="InterPro" id="IPR009000">
    <property type="entry name" value="Transl_B-barrel_sf"/>
</dbReference>
<dbReference type="NCBIfam" id="TIGR03625">
    <property type="entry name" value="L3_bact"/>
    <property type="match status" value="1"/>
</dbReference>
<dbReference type="PANTHER" id="PTHR11229">
    <property type="entry name" value="50S RIBOSOMAL PROTEIN L3"/>
    <property type="match status" value="1"/>
</dbReference>
<dbReference type="PANTHER" id="PTHR11229:SF16">
    <property type="entry name" value="LARGE RIBOSOMAL SUBUNIT PROTEIN UL3C"/>
    <property type="match status" value="1"/>
</dbReference>
<dbReference type="Pfam" id="PF00297">
    <property type="entry name" value="Ribosomal_L3"/>
    <property type="match status" value="1"/>
</dbReference>
<dbReference type="SUPFAM" id="SSF50447">
    <property type="entry name" value="Translation proteins"/>
    <property type="match status" value="1"/>
</dbReference>
<dbReference type="PROSITE" id="PS00474">
    <property type="entry name" value="RIBOSOMAL_L3"/>
    <property type="match status" value="1"/>
</dbReference>
<evidence type="ECO:0000255" key="1">
    <source>
        <dbReference type="HAMAP-Rule" id="MF_01325"/>
    </source>
</evidence>
<evidence type="ECO:0000256" key="2">
    <source>
        <dbReference type="SAM" id="MobiDB-lite"/>
    </source>
</evidence>
<evidence type="ECO:0000305" key="3"/>
<reference key="1">
    <citation type="journal article" date="2004" name="Science">
        <title>Illuminating the evolutionary history of chlamydiae.</title>
        <authorList>
            <person name="Horn M."/>
            <person name="Collingro A."/>
            <person name="Schmitz-Esser S."/>
            <person name="Beier C.L."/>
            <person name="Purkhold U."/>
            <person name="Fartmann B."/>
            <person name="Brandt P."/>
            <person name="Nyakatura G.J."/>
            <person name="Droege M."/>
            <person name="Frishman D."/>
            <person name="Rattei T."/>
            <person name="Mewes H.-W."/>
            <person name="Wagner M."/>
        </authorList>
    </citation>
    <scope>NUCLEOTIDE SEQUENCE [LARGE SCALE GENOMIC DNA]</scope>
    <source>
        <strain>UWE25</strain>
    </source>
</reference>